<gene>
    <name evidence="5" type="primary">rbdB</name>
    <name type="ORF">AFUB_078750</name>
</gene>
<reference key="1">
    <citation type="journal article" date="2008" name="PLoS Genet.">
        <title>Genomic islands in the pathogenic filamentous fungus Aspergillus fumigatus.</title>
        <authorList>
            <person name="Fedorova N.D."/>
            <person name="Khaldi N."/>
            <person name="Joardar V.S."/>
            <person name="Maiti R."/>
            <person name="Amedeo P."/>
            <person name="Anderson M.J."/>
            <person name="Crabtree J."/>
            <person name="Silva J.C."/>
            <person name="Badger J.H."/>
            <person name="Albarraq A."/>
            <person name="Angiuoli S."/>
            <person name="Bussey H."/>
            <person name="Bowyer P."/>
            <person name="Cotty P.J."/>
            <person name="Dyer P.S."/>
            <person name="Egan A."/>
            <person name="Galens K."/>
            <person name="Fraser-Liggett C.M."/>
            <person name="Haas B.J."/>
            <person name="Inman J.M."/>
            <person name="Kent R."/>
            <person name="Lemieux S."/>
            <person name="Malavazi I."/>
            <person name="Orvis J."/>
            <person name="Roemer T."/>
            <person name="Ronning C.M."/>
            <person name="Sundaram J.P."/>
            <person name="Sutton G."/>
            <person name="Turner G."/>
            <person name="Venter J.C."/>
            <person name="White O.R."/>
            <person name="Whitty B.R."/>
            <person name="Youngman P."/>
            <person name="Wolfe K.H."/>
            <person name="Goldman G.H."/>
            <person name="Wortman J.R."/>
            <person name="Jiang B."/>
            <person name="Denning D.W."/>
            <person name="Nierman W.C."/>
        </authorList>
    </citation>
    <scope>NUCLEOTIDE SEQUENCE [LARGE SCALE GENOMIC DNA]</scope>
    <source>
        <strain>CBS 144.89 / FGSC A1163 / CEA10</strain>
    </source>
</reference>
<reference key="2">
    <citation type="journal article" date="2016" name="MSphere">
        <title>RbdB, a Rhomboid Protease Critical for SREBP Activation and Virulence in Aspergillus fumigatus.</title>
        <authorList>
            <person name="Dhingra S."/>
            <person name="Kowalski C.H."/>
            <person name="Thammahong A."/>
            <person name="Beattie S.R."/>
            <person name="Bultman K.M."/>
            <person name="Cramer R.A."/>
        </authorList>
    </citation>
    <scope>FUNCTION</scope>
    <scope>DISRUPTION PHENOTYPE</scope>
</reference>
<proteinExistence type="inferred from homology"/>
<dbReference type="EC" id="3.4.21.105" evidence="4"/>
<dbReference type="EMBL" id="DS499599">
    <property type="protein sequence ID" value="EDP49842.1"/>
    <property type="molecule type" value="Genomic_DNA"/>
</dbReference>
<dbReference type="EnsemblFungi" id="EDP49842">
    <property type="protein sequence ID" value="EDP49842"/>
    <property type="gene ID" value="AFUB_078750"/>
</dbReference>
<dbReference type="VEuPathDB" id="FungiDB:AFUB_078750"/>
<dbReference type="HOGENOM" id="CLU_084816_0_0_1"/>
<dbReference type="OrthoDB" id="41676at5052"/>
<dbReference type="PhylomeDB" id="B0Y8W1"/>
<dbReference type="Proteomes" id="UP000001699">
    <property type="component" value="Unassembled WGS sequence"/>
</dbReference>
<dbReference type="GO" id="GO:0016020">
    <property type="term" value="C:membrane"/>
    <property type="evidence" value="ECO:0007669"/>
    <property type="project" value="UniProtKB-SubCell"/>
</dbReference>
<dbReference type="GO" id="GO:0004252">
    <property type="term" value="F:serine-type endopeptidase activity"/>
    <property type="evidence" value="ECO:0007669"/>
    <property type="project" value="InterPro"/>
</dbReference>
<dbReference type="GO" id="GO:0006508">
    <property type="term" value="P:proteolysis"/>
    <property type="evidence" value="ECO:0007669"/>
    <property type="project" value="UniProtKB-KW"/>
</dbReference>
<dbReference type="Gene3D" id="1.20.1540.10">
    <property type="entry name" value="Rhomboid-like"/>
    <property type="match status" value="1"/>
</dbReference>
<dbReference type="InterPro" id="IPR022764">
    <property type="entry name" value="Peptidase_S54_rhomboid_dom"/>
</dbReference>
<dbReference type="InterPro" id="IPR035952">
    <property type="entry name" value="Rhomboid-like_sf"/>
</dbReference>
<dbReference type="PANTHER" id="PTHR43066:SF1">
    <property type="entry name" value="RHOMBOID PROTEIN 2"/>
    <property type="match status" value="1"/>
</dbReference>
<dbReference type="PANTHER" id="PTHR43066">
    <property type="entry name" value="RHOMBOID-RELATED PROTEIN"/>
    <property type="match status" value="1"/>
</dbReference>
<dbReference type="Pfam" id="PF01694">
    <property type="entry name" value="Rhomboid"/>
    <property type="match status" value="1"/>
</dbReference>
<dbReference type="SUPFAM" id="SSF144091">
    <property type="entry name" value="Rhomboid-like"/>
    <property type="match status" value="1"/>
</dbReference>
<name>RBDB_ASPFC</name>
<comment type="function">
    <text evidence="4">Rhomboid protease that catalyzes intramembrane proteolysis (PubMed:27303716). Required for transcription factor srbA activation by mediating its release from the membrane and thereby regulating its activity under hypoxic conditions (PubMed:27303716). Essential for iron homeostasis and resistance to azoles such as voriconazole (PubMed:27303716). Required for virulence in murine models of invasive pulmonary aspergillosis (IPA) (PubMed:27303716).</text>
</comment>
<comment type="catalytic activity">
    <reaction evidence="4">
        <text>Cleaves type-1 transmembrane domains using a catalytic dyad composed of serine and histidine that are contributed by different transmembrane domains.</text>
        <dbReference type="EC" id="3.4.21.105"/>
    </reaction>
</comment>
<comment type="subcellular location">
    <subcellularLocation>
        <location evidence="2">Membrane</location>
        <topology evidence="2">Multi-pass membrane protein</topology>
    </subcellularLocation>
</comment>
<comment type="disruption phenotype">
    <text evidence="4">Impairs growth under hypoxic conditions and leads to increased azole drug susceptibility, reduced siderophore production, and full loss of virulence in a murine model of invasive pulmonary aspergillosis (IPA).</text>
</comment>
<comment type="similarity">
    <text evidence="6">Belongs to the peptidase S54 family.</text>
</comment>
<sequence length="272" mass="30091">MAIPAALPPLPFNPTRVRSYMLRLPLFTRIVLLVILAFWLLELQTIWSVVQWGSLTPNEIGIGSMYRLNTYPFIHVGFFHAFVNLLALTPLLERFEAEHGTLTAVALFIGPLSTFPAGIYILVEKFILRSNTAVVGASVWIFLLLGSEAIKTFKSNPYFSLGTTKIPTWTSPLFACALVSIFVPNTSFLGHLSAIIIGYLLGLGYLKVFVPPEKILRWIEGKLNLLGRLPHYVSVDQKTYGRYGVLPTATAAVGGERPTPLSYLGTNQRLGP</sequence>
<keyword id="KW-0325">Glycoprotein</keyword>
<keyword id="KW-0378">Hydrolase</keyword>
<keyword id="KW-0472">Membrane</keyword>
<keyword id="KW-0645">Protease</keyword>
<keyword id="KW-0720">Serine protease</keyword>
<keyword id="KW-0812">Transmembrane</keyword>
<keyword id="KW-1133">Transmembrane helix</keyword>
<feature type="chain" id="PRO_0000460152" description="Rhomboid-type serine protease B">
    <location>
        <begin position="1"/>
        <end position="272"/>
    </location>
</feature>
<feature type="transmembrane region" description="Helical" evidence="2">
    <location>
        <begin position="30"/>
        <end position="50"/>
    </location>
</feature>
<feature type="transmembrane region" description="Helical" evidence="2">
    <location>
        <begin position="72"/>
        <end position="92"/>
    </location>
</feature>
<feature type="transmembrane region" description="Helical" evidence="2">
    <location>
        <begin position="103"/>
        <end position="123"/>
    </location>
</feature>
<feature type="transmembrane region" description="Helical" evidence="2">
    <location>
        <begin position="133"/>
        <end position="153"/>
    </location>
</feature>
<feature type="transmembrane region" description="Helical" evidence="2">
    <location>
        <begin position="164"/>
        <end position="184"/>
    </location>
</feature>
<feature type="transmembrane region" description="Helical" evidence="2">
    <location>
        <begin position="186"/>
        <end position="206"/>
    </location>
</feature>
<feature type="active site" description="Nucleophile" evidence="1">
    <location>
        <position position="138"/>
    </location>
</feature>
<feature type="active site" evidence="1">
    <location>
        <position position="191"/>
    </location>
</feature>
<feature type="glycosylation site" description="N-linked (GlcNAc...) asparagine" evidence="3">
    <location>
        <position position="185"/>
    </location>
</feature>
<accession>B0Y8W1</accession>
<protein>
    <recommendedName>
        <fullName evidence="5">Rhomboid-type serine protease B</fullName>
        <ecNumber evidence="4">3.4.21.105</ecNumber>
    </recommendedName>
    <alternativeName>
        <fullName evidence="5">Golgi rhomboid protease rbdB</fullName>
    </alternativeName>
    <alternativeName>
        <fullName evidence="5">Rhomboid protein B</fullName>
    </alternativeName>
</protein>
<organism>
    <name type="scientific">Aspergillus fumigatus (strain CBS 144.89 / FGSC A1163 / CEA10)</name>
    <name type="common">Neosartorya fumigata</name>
    <dbReference type="NCBI Taxonomy" id="451804"/>
    <lineage>
        <taxon>Eukaryota</taxon>
        <taxon>Fungi</taxon>
        <taxon>Dikarya</taxon>
        <taxon>Ascomycota</taxon>
        <taxon>Pezizomycotina</taxon>
        <taxon>Eurotiomycetes</taxon>
        <taxon>Eurotiomycetidae</taxon>
        <taxon>Eurotiales</taxon>
        <taxon>Aspergillaceae</taxon>
        <taxon>Aspergillus</taxon>
        <taxon>Aspergillus subgen. Fumigati</taxon>
    </lineage>
</organism>
<evidence type="ECO:0000250" key="1">
    <source>
        <dbReference type="UniProtKB" id="O74926"/>
    </source>
</evidence>
<evidence type="ECO:0000255" key="2"/>
<evidence type="ECO:0000255" key="3">
    <source>
        <dbReference type="PROSITE-ProRule" id="PRU00498"/>
    </source>
</evidence>
<evidence type="ECO:0000269" key="4">
    <source>
    </source>
</evidence>
<evidence type="ECO:0000303" key="5">
    <source>
    </source>
</evidence>
<evidence type="ECO:0000305" key="6"/>